<protein>
    <recommendedName>
        <fullName>Tetrahydromethanopterin:alpha-L-glutamate ligase</fullName>
        <ecNumber>6.3.2.33</ecNumber>
    </recommendedName>
    <alternativeName>
        <fullName>H(4)MPT:alpha-L-glutamate ligase</fullName>
    </alternativeName>
</protein>
<proteinExistence type="inferred from homology"/>
<gene>
    <name type="primary">mptN</name>
    <name type="ordered locus">MA_3268</name>
</gene>
<dbReference type="EC" id="6.3.2.33"/>
<dbReference type="EMBL" id="AE010299">
    <property type="protein sequence ID" value="AAM06639.1"/>
    <property type="molecule type" value="Genomic_DNA"/>
</dbReference>
<dbReference type="RefSeq" id="WP_011023202.1">
    <property type="nucleotide sequence ID" value="NC_003552.1"/>
</dbReference>
<dbReference type="SMR" id="Q8TKX5"/>
<dbReference type="FunCoup" id="Q8TKX5">
    <property type="interactions" value="94"/>
</dbReference>
<dbReference type="STRING" id="188937.MA_3268"/>
<dbReference type="EnsemblBacteria" id="AAM06639">
    <property type="protein sequence ID" value="AAM06639"/>
    <property type="gene ID" value="MA_3268"/>
</dbReference>
<dbReference type="GeneID" id="1475161"/>
<dbReference type="KEGG" id="mac:MA_3268"/>
<dbReference type="HOGENOM" id="CLU_054353_2_0_2"/>
<dbReference type="InParanoid" id="Q8TKX5"/>
<dbReference type="OrthoDB" id="33241at2157"/>
<dbReference type="PhylomeDB" id="Q8TKX5"/>
<dbReference type="UniPathway" id="UPA00069"/>
<dbReference type="Proteomes" id="UP000002487">
    <property type="component" value="Chromosome"/>
</dbReference>
<dbReference type="GO" id="GO:0005737">
    <property type="term" value="C:cytoplasm"/>
    <property type="evidence" value="ECO:0000318"/>
    <property type="project" value="GO_Central"/>
</dbReference>
<dbReference type="GO" id="GO:0005524">
    <property type="term" value="F:ATP binding"/>
    <property type="evidence" value="ECO:0007669"/>
    <property type="project" value="UniProtKB-KW"/>
</dbReference>
<dbReference type="GO" id="GO:0005525">
    <property type="term" value="F:GTP binding"/>
    <property type="evidence" value="ECO:0007669"/>
    <property type="project" value="UniProtKB-KW"/>
</dbReference>
<dbReference type="GO" id="GO:0016879">
    <property type="term" value="F:ligase activity, forming carbon-nitrogen bonds"/>
    <property type="evidence" value="ECO:0000318"/>
    <property type="project" value="GO_Central"/>
</dbReference>
<dbReference type="GO" id="GO:0046872">
    <property type="term" value="F:metal ion binding"/>
    <property type="evidence" value="ECO:0007669"/>
    <property type="project" value="UniProtKB-KW"/>
</dbReference>
<dbReference type="GO" id="GO:0036211">
    <property type="term" value="P:protein modification process"/>
    <property type="evidence" value="ECO:0007669"/>
    <property type="project" value="InterPro"/>
</dbReference>
<dbReference type="Gene3D" id="3.40.50.20">
    <property type="match status" value="1"/>
</dbReference>
<dbReference type="Gene3D" id="3.30.470.20">
    <property type="entry name" value="ATP-grasp fold, B domain"/>
    <property type="match status" value="1"/>
</dbReference>
<dbReference type="InterPro" id="IPR011761">
    <property type="entry name" value="ATP-grasp"/>
</dbReference>
<dbReference type="InterPro" id="IPR013651">
    <property type="entry name" value="ATP-grasp_RimK-type"/>
</dbReference>
<dbReference type="InterPro" id="IPR041107">
    <property type="entry name" value="Rimk_N"/>
</dbReference>
<dbReference type="InterPro" id="IPR004666">
    <property type="entry name" value="Rp_bS6_RimK/Lys_biosynth_LsyX"/>
</dbReference>
<dbReference type="InterPro" id="IPR053432">
    <property type="entry name" value="THMPT_Glu_ligase"/>
</dbReference>
<dbReference type="NCBIfam" id="NF040720">
    <property type="entry name" value="MptN_Meth"/>
    <property type="match status" value="1"/>
</dbReference>
<dbReference type="NCBIfam" id="TIGR00768">
    <property type="entry name" value="rimK_fam"/>
    <property type="match status" value="1"/>
</dbReference>
<dbReference type="PANTHER" id="PTHR21621:SF0">
    <property type="entry name" value="BETA-CITRYLGLUTAMATE SYNTHASE B-RELATED"/>
    <property type="match status" value="1"/>
</dbReference>
<dbReference type="PANTHER" id="PTHR21621">
    <property type="entry name" value="RIBOSOMAL PROTEIN S6 MODIFICATION PROTEIN"/>
    <property type="match status" value="1"/>
</dbReference>
<dbReference type="Pfam" id="PF08443">
    <property type="entry name" value="RimK"/>
    <property type="match status" value="1"/>
</dbReference>
<dbReference type="Pfam" id="PF18030">
    <property type="entry name" value="Rimk_N"/>
    <property type="match status" value="1"/>
</dbReference>
<dbReference type="SUPFAM" id="SSF56059">
    <property type="entry name" value="Glutathione synthetase ATP-binding domain-like"/>
    <property type="match status" value="1"/>
</dbReference>
<dbReference type="PROSITE" id="PS50975">
    <property type="entry name" value="ATP_GRASP"/>
    <property type="match status" value="1"/>
</dbReference>
<sequence length="324" mass="34710">MKKIGIAITDPEDWTARALITAAKEKGFFPFILDLRIAEVSISSKTSEPATLFKAGEILLSDLDALIVRDVGAGAFEGVSFRFDILRELEAGGVTVMNSPEAIQNAANKYHASYLLARAGLPVPETVAVQSVEAALRAASGFGDAVIKPVFGYKGKDIARVKDGEIRFSDRKTGPGTVEEILEKLLEERGMLYIQEFIENPGRDIRAFVVGGKAIGAIYRKAAAGSWVNNLSRGGSADRCVLAEEQKEIAEKAALAVGTTFAGIDIIEGAKAQTGNENKKTEDKSTGQGSRILEVNGTPSGKGIFDAWGINPAEYILEYLQNIL</sequence>
<keyword id="KW-0067">ATP-binding</keyword>
<keyword id="KW-0342">GTP-binding</keyword>
<keyword id="KW-0436">Ligase</keyword>
<keyword id="KW-0460">Magnesium</keyword>
<keyword id="KW-0464">Manganese</keyword>
<keyword id="KW-0479">Metal-binding</keyword>
<keyword id="KW-0547">Nucleotide-binding</keyword>
<keyword id="KW-1185">Reference proteome</keyword>
<accession>Q8TKX5</accession>
<name>MPTN_METAC</name>
<feature type="chain" id="PRO_0000205504" description="Tetrahydromethanopterin:alpha-L-glutamate ligase">
    <location>
        <begin position="1"/>
        <end position="324"/>
    </location>
</feature>
<feature type="domain" description="ATP-grasp" evidence="2">
    <location>
        <begin position="113"/>
        <end position="321"/>
    </location>
</feature>
<feature type="region of interest" description="Disordered" evidence="3">
    <location>
        <begin position="274"/>
        <end position="293"/>
    </location>
</feature>
<feature type="binding site" evidence="1">
    <location>
        <position position="148"/>
    </location>
    <ligand>
        <name>ATP</name>
        <dbReference type="ChEBI" id="CHEBI:30616"/>
    </ligand>
</feature>
<feature type="binding site" evidence="2">
    <location>
        <begin position="195"/>
        <end position="204"/>
    </location>
    <ligand>
        <name>ATP</name>
        <dbReference type="ChEBI" id="CHEBI:30616"/>
    </ligand>
</feature>
<feature type="binding site" evidence="1">
    <location>
        <position position="220"/>
    </location>
    <ligand>
        <name>ATP</name>
        <dbReference type="ChEBI" id="CHEBI:30616"/>
    </ligand>
</feature>
<feature type="binding site" evidence="2">
    <location>
        <position position="265"/>
    </location>
    <ligand>
        <name>Mg(2+)</name>
        <dbReference type="ChEBI" id="CHEBI:18420"/>
        <label>1</label>
    </ligand>
</feature>
<feature type="binding site" evidence="2">
    <location>
        <position position="265"/>
    </location>
    <ligand>
        <name>Mn(2+)</name>
        <dbReference type="ChEBI" id="CHEBI:29035"/>
        <label>1</label>
    </ligand>
</feature>
<feature type="binding site" evidence="2">
    <location>
        <position position="294"/>
    </location>
    <ligand>
        <name>Mg(2+)</name>
        <dbReference type="ChEBI" id="CHEBI:18420"/>
        <label>1</label>
    </ligand>
</feature>
<feature type="binding site" evidence="2">
    <location>
        <position position="294"/>
    </location>
    <ligand>
        <name>Mg(2+)</name>
        <dbReference type="ChEBI" id="CHEBI:18420"/>
        <label>2</label>
    </ligand>
</feature>
<feature type="binding site" evidence="2">
    <location>
        <position position="294"/>
    </location>
    <ligand>
        <name>Mn(2+)</name>
        <dbReference type="ChEBI" id="CHEBI:29035"/>
        <label>1</label>
    </ligand>
</feature>
<feature type="binding site" evidence="2">
    <location>
        <position position="294"/>
    </location>
    <ligand>
        <name>Mn(2+)</name>
        <dbReference type="ChEBI" id="CHEBI:29035"/>
        <label>2</label>
    </ligand>
</feature>
<feature type="binding site" evidence="2">
    <location>
        <position position="296"/>
    </location>
    <ligand>
        <name>Mg(2+)</name>
        <dbReference type="ChEBI" id="CHEBI:18420"/>
        <label>2</label>
    </ligand>
</feature>
<feature type="binding site" evidence="2">
    <location>
        <position position="296"/>
    </location>
    <ligand>
        <name>Mn(2+)</name>
        <dbReference type="ChEBI" id="CHEBI:29035"/>
        <label>2</label>
    </ligand>
</feature>
<comment type="function">
    <text evidence="1">Catalyzes the ATP or GTP-dependent addition of one L-glutamate molecule to tetrahydromethanopterin, producing tetrahydrosarcinapterin.</text>
</comment>
<comment type="catalytic activity">
    <reaction>
        <text>5,6,7,8-tetrahydromethanopterin + L-glutamate + ATP = 5,6,7,8-tetrahydrosarcinapterin + ADP + phosphate + H(+)</text>
        <dbReference type="Rhea" id="RHEA:30567"/>
        <dbReference type="ChEBI" id="CHEBI:15378"/>
        <dbReference type="ChEBI" id="CHEBI:29985"/>
        <dbReference type="ChEBI" id="CHEBI:30616"/>
        <dbReference type="ChEBI" id="CHEBI:43474"/>
        <dbReference type="ChEBI" id="CHEBI:58103"/>
        <dbReference type="ChEBI" id="CHEBI:59924"/>
        <dbReference type="ChEBI" id="CHEBI:456216"/>
        <dbReference type="EC" id="6.3.2.33"/>
    </reaction>
</comment>
<comment type="cofactor">
    <cofactor evidence="1">
        <name>Mg(2+)</name>
        <dbReference type="ChEBI" id="CHEBI:18420"/>
    </cofactor>
    <cofactor evidence="1">
        <name>Mn(2+)</name>
        <dbReference type="ChEBI" id="CHEBI:29035"/>
    </cofactor>
    <text evidence="1">Binds 2 magnesium or manganese ions per subunit.</text>
</comment>
<comment type="pathway">
    <text>Cofactor biosynthesis; 5,6,7,8-tetrahydrosarcinapterin biosynthesis.</text>
</comment>
<comment type="subunit">
    <text evidence="1">Homodimer.</text>
</comment>
<comment type="similarity">
    <text evidence="4">Belongs to the RimK family. MptN subfamily.</text>
</comment>
<reference key="1">
    <citation type="journal article" date="2002" name="Genome Res.">
        <title>The genome of Methanosarcina acetivorans reveals extensive metabolic and physiological diversity.</title>
        <authorList>
            <person name="Galagan J.E."/>
            <person name="Nusbaum C."/>
            <person name="Roy A."/>
            <person name="Endrizzi M.G."/>
            <person name="Macdonald P."/>
            <person name="FitzHugh W."/>
            <person name="Calvo S."/>
            <person name="Engels R."/>
            <person name="Smirnov S."/>
            <person name="Atnoor D."/>
            <person name="Brown A."/>
            <person name="Allen N."/>
            <person name="Naylor J."/>
            <person name="Stange-Thomann N."/>
            <person name="DeArellano K."/>
            <person name="Johnson R."/>
            <person name="Linton L."/>
            <person name="McEwan P."/>
            <person name="McKernan K."/>
            <person name="Talamas J."/>
            <person name="Tirrell A."/>
            <person name="Ye W."/>
            <person name="Zimmer A."/>
            <person name="Barber R.D."/>
            <person name="Cann I."/>
            <person name="Graham D.E."/>
            <person name="Grahame D.A."/>
            <person name="Guss A.M."/>
            <person name="Hedderich R."/>
            <person name="Ingram-Smith C."/>
            <person name="Kuettner H.C."/>
            <person name="Krzycki J.A."/>
            <person name="Leigh J.A."/>
            <person name="Li W."/>
            <person name="Liu J."/>
            <person name="Mukhopadhyay B."/>
            <person name="Reeve J.N."/>
            <person name="Smith K."/>
            <person name="Springer T.A."/>
            <person name="Umayam L.A."/>
            <person name="White O."/>
            <person name="White R.H."/>
            <person name="de Macario E.C."/>
            <person name="Ferry J.G."/>
            <person name="Jarrell K.F."/>
            <person name="Jing H."/>
            <person name="Macario A.J.L."/>
            <person name="Paulsen I.T."/>
            <person name="Pritchett M."/>
            <person name="Sowers K.R."/>
            <person name="Swanson R.V."/>
            <person name="Zinder S.H."/>
            <person name="Lander E."/>
            <person name="Metcalf W.W."/>
            <person name="Birren B."/>
        </authorList>
    </citation>
    <scope>NUCLEOTIDE SEQUENCE [LARGE SCALE GENOMIC DNA]</scope>
    <source>
        <strain>ATCC 35395 / DSM 2834 / JCM 12185 / C2A</strain>
    </source>
</reference>
<organism>
    <name type="scientific">Methanosarcina acetivorans (strain ATCC 35395 / DSM 2834 / JCM 12185 / C2A)</name>
    <dbReference type="NCBI Taxonomy" id="188937"/>
    <lineage>
        <taxon>Archaea</taxon>
        <taxon>Methanobacteriati</taxon>
        <taxon>Methanobacteriota</taxon>
        <taxon>Stenosarchaea group</taxon>
        <taxon>Methanomicrobia</taxon>
        <taxon>Methanosarcinales</taxon>
        <taxon>Methanosarcinaceae</taxon>
        <taxon>Methanosarcina</taxon>
    </lineage>
</organism>
<evidence type="ECO:0000250" key="1"/>
<evidence type="ECO:0000255" key="2">
    <source>
        <dbReference type="PROSITE-ProRule" id="PRU00409"/>
    </source>
</evidence>
<evidence type="ECO:0000256" key="3">
    <source>
        <dbReference type="SAM" id="MobiDB-lite"/>
    </source>
</evidence>
<evidence type="ECO:0000305" key="4"/>